<keyword id="KW-1185">Reference proteome</keyword>
<keyword id="KW-0687">Ribonucleoprotein</keyword>
<keyword id="KW-0689">Ribosomal protein</keyword>
<sequence>MKVRPSVKPICEKCKVIRRKGNVMVICENPKHKQKQG</sequence>
<reference key="1">
    <citation type="submission" date="2005-03" db="EMBL/GenBank/DDBJ databases">
        <title>Brevibacillus brevis strain 47, complete genome.</title>
        <authorList>
            <person name="Hosoyama A."/>
            <person name="Yamada R."/>
            <person name="Hongo Y."/>
            <person name="Terui Y."/>
            <person name="Ankai A."/>
            <person name="Masuyama W."/>
            <person name="Sekiguchi M."/>
            <person name="Takeda T."/>
            <person name="Asano K."/>
            <person name="Ohji S."/>
            <person name="Ichikawa N."/>
            <person name="Narita S."/>
            <person name="Aoki N."/>
            <person name="Miura H."/>
            <person name="Matsushita S."/>
            <person name="Sekigawa T."/>
            <person name="Yamagata H."/>
            <person name="Yoshikawa H."/>
            <person name="Udaka S."/>
            <person name="Tanikawa S."/>
            <person name="Fujita N."/>
        </authorList>
    </citation>
    <scope>NUCLEOTIDE SEQUENCE [LARGE SCALE GENOMIC DNA]</scope>
    <source>
        <strain>47 / JCM 6285 / NBRC 100599</strain>
    </source>
</reference>
<feature type="chain" id="PRO_1000196171" description="Large ribosomal subunit protein bL36">
    <location>
        <begin position="1"/>
        <end position="37"/>
    </location>
</feature>
<name>RL36_BREBN</name>
<accession>C0ZIK4</accession>
<evidence type="ECO:0000255" key="1">
    <source>
        <dbReference type="HAMAP-Rule" id="MF_00251"/>
    </source>
</evidence>
<evidence type="ECO:0000305" key="2"/>
<gene>
    <name evidence="1" type="primary">rpmJ</name>
    <name type="ordered locus">BBR47_02450</name>
</gene>
<protein>
    <recommendedName>
        <fullName evidence="1">Large ribosomal subunit protein bL36</fullName>
    </recommendedName>
    <alternativeName>
        <fullName evidence="2">50S ribosomal protein L36</fullName>
    </alternativeName>
</protein>
<dbReference type="EMBL" id="AP008955">
    <property type="protein sequence ID" value="BAH41222.1"/>
    <property type="molecule type" value="Genomic_DNA"/>
</dbReference>
<dbReference type="RefSeq" id="WP_003333770.1">
    <property type="nucleotide sequence ID" value="NC_012491.1"/>
</dbReference>
<dbReference type="SMR" id="C0ZIK4"/>
<dbReference type="STRING" id="358681.BBR47_02450"/>
<dbReference type="GeneID" id="98575693"/>
<dbReference type="KEGG" id="bbe:BBR47_02450"/>
<dbReference type="eggNOG" id="COG0257">
    <property type="taxonomic scope" value="Bacteria"/>
</dbReference>
<dbReference type="HOGENOM" id="CLU_135723_6_2_9"/>
<dbReference type="Proteomes" id="UP000001877">
    <property type="component" value="Chromosome"/>
</dbReference>
<dbReference type="GO" id="GO:0005737">
    <property type="term" value="C:cytoplasm"/>
    <property type="evidence" value="ECO:0007669"/>
    <property type="project" value="UniProtKB-ARBA"/>
</dbReference>
<dbReference type="GO" id="GO:1990904">
    <property type="term" value="C:ribonucleoprotein complex"/>
    <property type="evidence" value="ECO:0007669"/>
    <property type="project" value="UniProtKB-KW"/>
</dbReference>
<dbReference type="GO" id="GO:0005840">
    <property type="term" value="C:ribosome"/>
    <property type="evidence" value="ECO:0007669"/>
    <property type="project" value="UniProtKB-KW"/>
</dbReference>
<dbReference type="GO" id="GO:0003735">
    <property type="term" value="F:structural constituent of ribosome"/>
    <property type="evidence" value="ECO:0007669"/>
    <property type="project" value="InterPro"/>
</dbReference>
<dbReference type="GO" id="GO:0006412">
    <property type="term" value="P:translation"/>
    <property type="evidence" value="ECO:0007669"/>
    <property type="project" value="UniProtKB-UniRule"/>
</dbReference>
<dbReference type="HAMAP" id="MF_00251">
    <property type="entry name" value="Ribosomal_bL36"/>
    <property type="match status" value="1"/>
</dbReference>
<dbReference type="InterPro" id="IPR000473">
    <property type="entry name" value="Ribosomal_bL36"/>
</dbReference>
<dbReference type="InterPro" id="IPR035977">
    <property type="entry name" value="Ribosomal_bL36_sp"/>
</dbReference>
<dbReference type="NCBIfam" id="TIGR01022">
    <property type="entry name" value="rpmJ_bact"/>
    <property type="match status" value="1"/>
</dbReference>
<dbReference type="PANTHER" id="PTHR42888">
    <property type="entry name" value="50S RIBOSOMAL PROTEIN L36, CHLOROPLASTIC"/>
    <property type="match status" value="1"/>
</dbReference>
<dbReference type="PANTHER" id="PTHR42888:SF1">
    <property type="entry name" value="LARGE RIBOSOMAL SUBUNIT PROTEIN BL36C"/>
    <property type="match status" value="1"/>
</dbReference>
<dbReference type="Pfam" id="PF00444">
    <property type="entry name" value="Ribosomal_L36"/>
    <property type="match status" value="1"/>
</dbReference>
<dbReference type="SUPFAM" id="SSF57840">
    <property type="entry name" value="Ribosomal protein L36"/>
    <property type="match status" value="1"/>
</dbReference>
<dbReference type="PROSITE" id="PS00828">
    <property type="entry name" value="RIBOSOMAL_L36"/>
    <property type="match status" value="1"/>
</dbReference>
<proteinExistence type="inferred from homology"/>
<comment type="similarity">
    <text evidence="1">Belongs to the bacterial ribosomal protein bL36 family.</text>
</comment>
<organism>
    <name type="scientific">Brevibacillus brevis (strain 47 / JCM 6285 / NBRC 100599)</name>
    <dbReference type="NCBI Taxonomy" id="358681"/>
    <lineage>
        <taxon>Bacteria</taxon>
        <taxon>Bacillati</taxon>
        <taxon>Bacillota</taxon>
        <taxon>Bacilli</taxon>
        <taxon>Bacillales</taxon>
        <taxon>Paenibacillaceae</taxon>
        <taxon>Brevibacillus</taxon>
    </lineage>
</organism>